<comment type="function">
    <text evidence="1">Inhibits the supercoiling activity of DNA gyrase. Acts by inhibiting DNA gyrase at an early step, prior to (or at the step of) binding of DNA by the gyrase. It protects cells against toxins that target DNA gyrase, by inhibiting activity of these toxins and reducing the formation of lethal double-strand breaks in the cell.</text>
</comment>
<comment type="subunit">
    <text evidence="1">Interacts with DNA gyrase.</text>
</comment>
<comment type="subcellular location">
    <subcellularLocation>
        <location evidence="1">Cytoplasm</location>
    </subcellularLocation>
</comment>
<comment type="similarity">
    <text evidence="1">Belongs to the DNA gyrase inhibitor family.</text>
</comment>
<sequence>MTVRIEDKSAERVVGVRVVGPYPQTIPQGCQRLMAWQQQHQVPLGKWLVLYWDDPAEVAPERLRADVVFTVADDFVLPTSGSEGFALQTLPAGQYAIYNVRVSDGDFERVWGDFYQRELPASGYQPVEGVSYEHYLNDCEADGYFDLDIYQTVKKG</sequence>
<name>SBMC_SERP5</name>
<proteinExistence type="inferred from homology"/>
<accession>A8GG82</accession>
<dbReference type="EMBL" id="CP000826">
    <property type="protein sequence ID" value="ABV42122.1"/>
    <property type="molecule type" value="Genomic_DNA"/>
</dbReference>
<dbReference type="SMR" id="A8GG82"/>
<dbReference type="STRING" id="399741.Spro_3021"/>
<dbReference type="KEGG" id="spe:Spro_3021"/>
<dbReference type="eggNOG" id="COG3449">
    <property type="taxonomic scope" value="Bacteria"/>
</dbReference>
<dbReference type="HOGENOM" id="CLU_113664_3_0_6"/>
<dbReference type="OrthoDB" id="282744at2"/>
<dbReference type="GO" id="GO:0005737">
    <property type="term" value="C:cytoplasm"/>
    <property type="evidence" value="ECO:0007669"/>
    <property type="project" value="UniProtKB-SubCell"/>
</dbReference>
<dbReference type="GO" id="GO:0008657">
    <property type="term" value="F:DNA topoisomerase type II (double strand cut, ATP-hydrolyzing) inhibitor activity"/>
    <property type="evidence" value="ECO:0007669"/>
    <property type="project" value="UniProtKB-UniRule"/>
</dbReference>
<dbReference type="Gene3D" id="3.20.80.10">
    <property type="entry name" value="Regulatory factor, effector binding domain"/>
    <property type="match status" value="1"/>
</dbReference>
<dbReference type="HAMAP" id="MF_01896">
    <property type="entry name" value="DNA_gyrase_inhibitor"/>
    <property type="match status" value="1"/>
</dbReference>
<dbReference type="InterPro" id="IPR010499">
    <property type="entry name" value="AraC_E-bd"/>
</dbReference>
<dbReference type="InterPro" id="IPR050908">
    <property type="entry name" value="DNA_gyrase_inhibitor"/>
</dbReference>
<dbReference type="InterPro" id="IPR024911">
    <property type="entry name" value="DNA_gyrase_inhibitor_GyrI"/>
</dbReference>
<dbReference type="InterPro" id="IPR029442">
    <property type="entry name" value="GyrI-like"/>
</dbReference>
<dbReference type="InterPro" id="IPR011256">
    <property type="entry name" value="Reg_factor_effector_dom_sf"/>
</dbReference>
<dbReference type="NCBIfam" id="NF007451">
    <property type="entry name" value="PRK10016.1"/>
    <property type="match status" value="1"/>
</dbReference>
<dbReference type="PANTHER" id="PTHR40055:SF2">
    <property type="entry name" value="DNA GYRASE INHIBITOR"/>
    <property type="match status" value="1"/>
</dbReference>
<dbReference type="PANTHER" id="PTHR40055">
    <property type="entry name" value="TRANSCRIPTIONAL REGULATOR YGIV-RELATED"/>
    <property type="match status" value="1"/>
</dbReference>
<dbReference type="Pfam" id="PF06445">
    <property type="entry name" value="GyrI-like"/>
    <property type="match status" value="1"/>
</dbReference>
<dbReference type="SMART" id="SM00871">
    <property type="entry name" value="AraC_E_bind"/>
    <property type="match status" value="1"/>
</dbReference>
<dbReference type="SUPFAM" id="SSF55136">
    <property type="entry name" value="Probable bacterial effector-binding domain"/>
    <property type="match status" value="1"/>
</dbReference>
<gene>
    <name evidence="1" type="primary">sbmC</name>
    <name type="ordered locus">Spro_3021</name>
</gene>
<feature type="chain" id="PRO_0000409706" description="DNA gyrase inhibitor">
    <location>
        <begin position="1"/>
        <end position="156"/>
    </location>
</feature>
<keyword id="KW-0963">Cytoplasm</keyword>
<keyword id="KW-0346">Stress response</keyword>
<evidence type="ECO:0000255" key="1">
    <source>
        <dbReference type="HAMAP-Rule" id="MF_01896"/>
    </source>
</evidence>
<organism>
    <name type="scientific">Serratia proteamaculans (strain 568)</name>
    <dbReference type="NCBI Taxonomy" id="399741"/>
    <lineage>
        <taxon>Bacteria</taxon>
        <taxon>Pseudomonadati</taxon>
        <taxon>Pseudomonadota</taxon>
        <taxon>Gammaproteobacteria</taxon>
        <taxon>Enterobacterales</taxon>
        <taxon>Yersiniaceae</taxon>
        <taxon>Serratia</taxon>
    </lineage>
</organism>
<reference key="1">
    <citation type="submission" date="2007-09" db="EMBL/GenBank/DDBJ databases">
        <title>Complete sequence of chromosome of Serratia proteamaculans 568.</title>
        <authorList>
            <consortium name="US DOE Joint Genome Institute"/>
            <person name="Copeland A."/>
            <person name="Lucas S."/>
            <person name="Lapidus A."/>
            <person name="Barry K."/>
            <person name="Glavina del Rio T."/>
            <person name="Dalin E."/>
            <person name="Tice H."/>
            <person name="Pitluck S."/>
            <person name="Chain P."/>
            <person name="Malfatti S."/>
            <person name="Shin M."/>
            <person name="Vergez L."/>
            <person name="Schmutz J."/>
            <person name="Larimer F."/>
            <person name="Land M."/>
            <person name="Hauser L."/>
            <person name="Kyrpides N."/>
            <person name="Kim E."/>
            <person name="Taghavi S."/>
            <person name="Newman L."/>
            <person name="Vangronsveld J."/>
            <person name="van der Lelie D."/>
            <person name="Richardson P."/>
        </authorList>
    </citation>
    <scope>NUCLEOTIDE SEQUENCE [LARGE SCALE GENOMIC DNA]</scope>
    <source>
        <strain>568</strain>
    </source>
</reference>
<protein>
    <recommendedName>
        <fullName evidence="1">DNA gyrase inhibitor</fullName>
    </recommendedName>
</protein>